<dbReference type="EC" id="2.8.1.8" evidence="1"/>
<dbReference type="EMBL" id="AP009493">
    <property type="protein sequence ID" value="BAG22148.1"/>
    <property type="molecule type" value="Genomic_DNA"/>
</dbReference>
<dbReference type="RefSeq" id="WP_003969592.1">
    <property type="nucleotide sequence ID" value="NC_010572.1"/>
</dbReference>
<dbReference type="SMR" id="B1VZM3"/>
<dbReference type="KEGG" id="sgr:SGR_5319"/>
<dbReference type="eggNOG" id="COG0320">
    <property type="taxonomic scope" value="Bacteria"/>
</dbReference>
<dbReference type="HOGENOM" id="CLU_033144_2_1_11"/>
<dbReference type="UniPathway" id="UPA00538">
    <property type="reaction ID" value="UER00593"/>
</dbReference>
<dbReference type="Proteomes" id="UP000001685">
    <property type="component" value="Chromosome"/>
</dbReference>
<dbReference type="GO" id="GO:0005737">
    <property type="term" value="C:cytoplasm"/>
    <property type="evidence" value="ECO:0007669"/>
    <property type="project" value="UniProtKB-SubCell"/>
</dbReference>
<dbReference type="GO" id="GO:0051539">
    <property type="term" value="F:4 iron, 4 sulfur cluster binding"/>
    <property type="evidence" value="ECO:0007669"/>
    <property type="project" value="UniProtKB-UniRule"/>
</dbReference>
<dbReference type="GO" id="GO:0016992">
    <property type="term" value="F:lipoate synthase activity"/>
    <property type="evidence" value="ECO:0007669"/>
    <property type="project" value="UniProtKB-UniRule"/>
</dbReference>
<dbReference type="GO" id="GO:0046872">
    <property type="term" value="F:metal ion binding"/>
    <property type="evidence" value="ECO:0007669"/>
    <property type="project" value="UniProtKB-KW"/>
</dbReference>
<dbReference type="CDD" id="cd01335">
    <property type="entry name" value="Radical_SAM"/>
    <property type="match status" value="1"/>
</dbReference>
<dbReference type="FunFam" id="3.20.20.70:FF:000116">
    <property type="entry name" value="Lipoyl synthase"/>
    <property type="match status" value="1"/>
</dbReference>
<dbReference type="Gene3D" id="3.20.20.70">
    <property type="entry name" value="Aldolase class I"/>
    <property type="match status" value="1"/>
</dbReference>
<dbReference type="HAMAP" id="MF_00206">
    <property type="entry name" value="Lipoyl_synth"/>
    <property type="match status" value="1"/>
</dbReference>
<dbReference type="InterPro" id="IPR013785">
    <property type="entry name" value="Aldolase_TIM"/>
</dbReference>
<dbReference type="InterPro" id="IPR006638">
    <property type="entry name" value="Elp3/MiaA/NifB-like_rSAM"/>
</dbReference>
<dbReference type="InterPro" id="IPR031691">
    <property type="entry name" value="LIAS_N"/>
</dbReference>
<dbReference type="InterPro" id="IPR003698">
    <property type="entry name" value="Lipoyl_synth"/>
</dbReference>
<dbReference type="InterPro" id="IPR007197">
    <property type="entry name" value="rSAM"/>
</dbReference>
<dbReference type="NCBIfam" id="TIGR00510">
    <property type="entry name" value="lipA"/>
    <property type="match status" value="1"/>
</dbReference>
<dbReference type="NCBIfam" id="NF004019">
    <property type="entry name" value="PRK05481.1"/>
    <property type="match status" value="1"/>
</dbReference>
<dbReference type="NCBIfam" id="NF009544">
    <property type="entry name" value="PRK12928.1"/>
    <property type="match status" value="1"/>
</dbReference>
<dbReference type="PANTHER" id="PTHR10949">
    <property type="entry name" value="LIPOYL SYNTHASE"/>
    <property type="match status" value="1"/>
</dbReference>
<dbReference type="PANTHER" id="PTHR10949:SF0">
    <property type="entry name" value="LIPOYL SYNTHASE, MITOCHONDRIAL"/>
    <property type="match status" value="1"/>
</dbReference>
<dbReference type="Pfam" id="PF16881">
    <property type="entry name" value="LIAS_N"/>
    <property type="match status" value="1"/>
</dbReference>
<dbReference type="Pfam" id="PF04055">
    <property type="entry name" value="Radical_SAM"/>
    <property type="match status" value="1"/>
</dbReference>
<dbReference type="PIRSF" id="PIRSF005963">
    <property type="entry name" value="Lipoyl_synth"/>
    <property type="match status" value="1"/>
</dbReference>
<dbReference type="SFLD" id="SFLDF00271">
    <property type="entry name" value="lipoyl_synthase"/>
    <property type="match status" value="1"/>
</dbReference>
<dbReference type="SFLD" id="SFLDS00029">
    <property type="entry name" value="Radical_SAM"/>
    <property type="match status" value="1"/>
</dbReference>
<dbReference type="SMART" id="SM00729">
    <property type="entry name" value="Elp3"/>
    <property type="match status" value="1"/>
</dbReference>
<dbReference type="SUPFAM" id="SSF102114">
    <property type="entry name" value="Radical SAM enzymes"/>
    <property type="match status" value="1"/>
</dbReference>
<dbReference type="PROSITE" id="PS51918">
    <property type="entry name" value="RADICAL_SAM"/>
    <property type="match status" value="1"/>
</dbReference>
<gene>
    <name evidence="1" type="primary">lipA</name>
    <name type="ordered locus">SGR_5319</name>
</gene>
<comment type="function">
    <text evidence="1">Catalyzes the radical-mediated insertion of two sulfur atoms into the C-6 and C-8 positions of the octanoyl moiety bound to the lipoyl domains of lipoate-dependent enzymes, thereby converting the octanoylated domains into lipoylated derivatives.</text>
</comment>
<comment type="catalytic activity">
    <reaction evidence="1">
        <text>[[Fe-S] cluster scaffold protein carrying a second [4Fe-4S](2+) cluster] + N(6)-octanoyl-L-lysyl-[protein] + 2 oxidized [2Fe-2S]-[ferredoxin] + 2 S-adenosyl-L-methionine + 4 H(+) = [[Fe-S] cluster scaffold protein] + N(6)-[(R)-dihydrolipoyl]-L-lysyl-[protein] + 4 Fe(3+) + 2 hydrogen sulfide + 2 5'-deoxyadenosine + 2 L-methionine + 2 reduced [2Fe-2S]-[ferredoxin]</text>
        <dbReference type="Rhea" id="RHEA:16585"/>
        <dbReference type="Rhea" id="RHEA-COMP:9928"/>
        <dbReference type="Rhea" id="RHEA-COMP:10000"/>
        <dbReference type="Rhea" id="RHEA-COMP:10001"/>
        <dbReference type="Rhea" id="RHEA-COMP:10475"/>
        <dbReference type="Rhea" id="RHEA-COMP:14568"/>
        <dbReference type="Rhea" id="RHEA-COMP:14569"/>
        <dbReference type="ChEBI" id="CHEBI:15378"/>
        <dbReference type="ChEBI" id="CHEBI:17319"/>
        <dbReference type="ChEBI" id="CHEBI:29034"/>
        <dbReference type="ChEBI" id="CHEBI:29919"/>
        <dbReference type="ChEBI" id="CHEBI:33722"/>
        <dbReference type="ChEBI" id="CHEBI:33737"/>
        <dbReference type="ChEBI" id="CHEBI:33738"/>
        <dbReference type="ChEBI" id="CHEBI:57844"/>
        <dbReference type="ChEBI" id="CHEBI:59789"/>
        <dbReference type="ChEBI" id="CHEBI:78809"/>
        <dbReference type="ChEBI" id="CHEBI:83100"/>
        <dbReference type="EC" id="2.8.1.8"/>
    </reaction>
</comment>
<comment type="cofactor">
    <cofactor evidence="1">
        <name>[4Fe-4S] cluster</name>
        <dbReference type="ChEBI" id="CHEBI:49883"/>
    </cofactor>
    <text evidence="1">Binds 2 [4Fe-4S] clusters per subunit. One cluster is coordinated with 3 cysteines and an exchangeable S-adenosyl-L-methionine.</text>
</comment>
<comment type="pathway">
    <text evidence="1">Protein modification; protein lipoylation via endogenous pathway; protein N(6)-(lipoyl)lysine from octanoyl-[acyl-carrier-protein]: step 2/2.</text>
</comment>
<comment type="subcellular location">
    <subcellularLocation>
        <location evidence="1">Cytoplasm</location>
    </subcellularLocation>
</comment>
<comment type="similarity">
    <text evidence="1">Belongs to the radical SAM superfamily. Lipoyl synthase family.</text>
</comment>
<keyword id="KW-0004">4Fe-4S</keyword>
<keyword id="KW-0963">Cytoplasm</keyword>
<keyword id="KW-0408">Iron</keyword>
<keyword id="KW-0411">Iron-sulfur</keyword>
<keyword id="KW-0479">Metal-binding</keyword>
<keyword id="KW-0949">S-adenosyl-L-methionine</keyword>
<keyword id="KW-0808">Transferase</keyword>
<reference key="1">
    <citation type="journal article" date="2008" name="J. Bacteriol.">
        <title>Genome sequence of the streptomycin-producing microorganism Streptomyces griseus IFO 13350.</title>
        <authorList>
            <person name="Ohnishi Y."/>
            <person name="Ishikawa J."/>
            <person name="Hara H."/>
            <person name="Suzuki H."/>
            <person name="Ikenoya M."/>
            <person name="Ikeda H."/>
            <person name="Yamashita A."/>
            <person name="Hattori M."/>
            <person name="Horinouchi S."/>
        </authorList>
    </citation>
    <scope>NUCLEOTIDE SEQUENCE [LARGE SCALE GENOMIC DNA]</scope>
    <source>
        <strain>JCM 4626 / CBS 651.72 / NBRC 13350 / KCC S-0626 / ISP 5235</strain>
    </source>
</reference>
<proteinExistence type="inferred from homology"/>
<protein>
    <recommendedName>
        <fullName evidence="1">Lipoyl synthase</fullName>
        <ecNumber evidence="1">2.8.1.8</ecNumber>
    </recommendedName>
    <alternativeName>
        <fullName evidence="1">Lip-syn</fullName>
        <shortName evidence="1">LS</shortName>
    </alternativeName>
    <alternativeName>
        <fullName evidence="1">Lipoate synthase</fullName>
    </alternativeName>
    <alternativeName>
        <fullName evidence="1">Lipoic acid synthase</fullName>
    </alternativeName>
    <alternativeName>
        <fullName evidence="1">Sulfur insertion protein LipA</fullName>
    </alternativeName>
</protein>
<name>LIPA_STRGG</name>
<accession>B1VZM3</accession>
<feature type="chain" id="PRO_1000099637" description="Lipoyl synthase">
    <location>
        <begin position="1"/>
        <end position="326"/>
    </location>
</feature>
<feature type="domain" description="Radical SAM core" evidence="2">
    <location>
        <begin position="68"/>
        <end position="287"/>
    </location>
</feature>
<feature type="binding site" evidence="1">
    <location>
        <position position="56"/>
    </location>
    <ligand>
        <name>[4Fe-4S] cluster</name>
        <dbReference type="ChEBI" id="CHEBI:49883"/>
        <label>1</label>
    </ligand>
</feature>
<feature type="binding site" evidence="1">
    <location>
        <position position="61"/>
    </location>
    <ligand>
        <name>[4Fe-4S] cluster</name>
        <dbReference type="ChEBI" id="CHEBI:49883"/>
        <label>1</label>
    </ligand>
</feature>
<feature type="binding site" evidence="1">
    <location>
        <position position="67"/>
    </location>
    <ligand>
        <name>[4Fe-4S] cluster</name>
        <dbReference type="ChEBI" id="CHEBI:49883"/>
        <label>1</label>
    </ligand>
</feature>
<feature type="binding site" evidence="1">
    <location>
        <position position="82"/>
    </location>
    <ligand>
        <name>[4Fe-4S] cluster</name>
        <dbReference type="ChEBI" id="CHEBI:49883"/>
        <label>2</label>
        <note>4Fe-4S-S-AdoMet</note>
    </ligand>
</feature>
<feature type="binding site" evidence="1">
    <location>
        <position position="86"/>
    </location>
    <ligand>
        <name>[4Fe-4S] cluster</name>
        <dbReference type="ChEBI" id="CHEBI:49883"/>
        <label>2</label>
        <note>4Fe-4S-S-AdoMet</note>
    </ligand>
</feature>
<feature type="binding site" evidence="1">
    <location>
        <position position="89"/>
    </location>
    <ligand>
        <name>[4Fe-4S] cluster</name>
        <dbReference type="ChEBI" id="CHEBI:49883"/>
        <label>2</label>
        <note>4Fe-4S-S-AdoMet</note>
    </ligand>
</feature>
<feature type="binding site" evidence="1">
    <location>
        <position position="298"/>
    </location>
    <ligand>
        <name>[4Fe-4S] cluster</name>
        <dbReference type="ChEBI" id="CHEBI:49883"/>
        <label>1</label>
    </ligand>
</feature>
<sequence>MSAVAPDGRKMLRLEVRNSQTPIERKPEWIKTRAKMGPEYKQLQQLVKGEGLHTVCQEAGCPNIFECWEDREATFLIGGDQCTRRCDFCQIDTGKPQALDRDEPRRVGESVVTMDLNYATITGVARDDLEDGGAWLYAETVRQIHTLTAEREAGATKVELLIPDFNAEPEQLAEVFSSRPEVLAHNVETVPRIFKRIRPGFRYERSLEVITRAREAGLITKSNLILGMGETREEVSEALQDLYDAGCELITITQYLRPSVRHHPVERWVKPHEFVELKDEADAIGYSGVMSGPLVRSSYRAGRLFQQAMEARGVAAAGSAQAAQAV</sequence>
<evidence type="ECO:0000255" key="1">
    <source>
        <dbReference type="HAMAP-Rule" id="MF_00206"/>
    </source>
</evidence>
<evidence type="ECO:0000255" key="2">
    <source>
        <dbReference type="PROSITE-ProRule" id="PRU01266"/>
    </source>
</evidence>
<organism>
    <name type="scientific">Streptomyces griseus subsp. griseus (strain JCM 4626 / CBS 651.72 / NBRC 13350 / KCC S-0626 / ISP 5235)</name>
    <dbReference type="NCBI Taxonomy" id="455632"/>
    <lineage>
        <taxon>Bacteria</taxon>
        <taxon>Bacillati</taxon>
        <taxon>Actinomycetota</taxon>
        <taxon>Actinomycetes</taxon>
        <taxon>Kitasatosporales</taxon>
        <taxon>Streptomycetaceae</taxon>
        <taxon>Streptomyces</taxon>
    </lineage>
</organism>